<organism>
    <name type="scientific">Staphylococcus aureus (strain MW2)</name>
    <dbReference type="NCBI Taxonomy" id="196620"/>
    <lineage>
        <taxon>Bacteria</taxon>
        <taxon>Bacillati</taxon>
        <taxon>Bacillota</taxon>
        <taxon>Bacilli</taxon>
        <taxon>Bacillales</taxon>
        <taxon>Staphylococcaceae</taxon>
        <taxon>Staphylococcus</taxon>
    </lineage>
</organism>
<sequence>MSVFIDKNTKVMVQGITGSTALFHTKQMLDYGTKIVAGVTPGKGGQVVEGVPVFNTVEEAKNETGATVSVIYVPAPFAADSILEAADADLDMVICITEHIPVLDMVKVKRYLQGRKTRLVGPNCPGVITADECKIGIMPGYIHKKGHVGVVSRSGTLTYEAVHQLTEEGIGQTTAVGIGGDPVNGTNFIDVLKAFNEDDETKAVVMIGEIGGTAEEEAAEWIKANMTKPVVGFIGGQTAPPGKRMGHAGAIISGGKGTAEEKIKTLNSCGVKTAATPSEIGSTLIEAAKEAGIYEALLTVNK</sequence>
<comment type="function">
    <text evidence="1">Succinyl-CoA synthetase functions in the citric acid cycle (TCA), coupling the hydrolysis of succinyl-CoA to the synthesis of either ATP or GTP and thus represents the only step of substrate-level phosphorylation in the TCA. The alpha subunit of the enzyme binds the substrates coenzyme A and phosphate, while succinate binding and nucleotide specificity is provided by the beta subunit.</text>
</comment>
<comment type="catalytic activity">
    <reaction evidence="1">
        <text>succinate + ATP + CoA = succinyl-CoA + ADP + phosphate</text>
        <dbReference type="Rhea" id="RHEA:17661"/>
        <dbReference type="ChEBI" id="CHEBI:30031"/>
        <dbReference type="ChEBI" id="CHEBI:30616"/>
        <dbReference type="ChEBI" id="CHEBI:43474"/>
        <dbReference type="ChEBI" id="CHEBI:57287"/>
        <dbReference type="ChEBI" id="CHEBI:57292"/>
        <dbReference type="ChEBI" id="CHEBI:456216"/>
        <dbReference type="EC" id="6.2.1.5"/>
    </reaction>
    <physiologicalReaction direction="right-to-left" evidence="1">
        <dbReference type="Rhea" id="RHEA:17663"/>
    </physiologicalReaction>
</comment>
<comment type="catalytic activity">
    <reaction evidence="1">
        <text>GTP + succinate + CoA = succinyl-CoA + GDP + phosphate</text>
        <dbReference type="Rhea" id="RHEA:22120"/>
        <dbReference type="ChEBI" id="CHEBI:30031"/>
        <dbReference type="ChEBI" id="CHEBI:37565"/>
        <dbReference type="ChEBI" id="CHEBI:43474"/>
        <dbReference type="ChEBI" id="CHEBI:57287"/>
        <dbReference type="ChEBI" id="CHEBI:57292"/>
        <dbReference type="ChEBI" id="CHEBI:58189"/>
    </reaction>
    <physiologicalReaction direction="right-to-left" evidence="1">
        <dbReference type="Rhea" id="RHEA:22122"/>
    </physiologicalReaction>
</comment>
<comment type="pathway">
    <text evidence="1">Carbohydrate metabolism; tricarboxylic acid cycle; succinate from succinyl-CoA (ligase route): step 1/1.</text>
</comment>
<comment type="subunit">
    <text evidence="1">Heterotetramer of two alpha and two beta subunits.</text>
</comment>
<comment type="similarity">
    <text evidence="1">Belongs to the succinate/malate CoA ligase alpha subunit family.</text>
</comment>
<reference key="1">
    <citation type="journal article" date="2002" name="Lancet">
        <title>Genome and virulence determinants of high virulence community-acquired MRSA.</title>
        <authorList>
            <person name="Baba T."/>
            <person name="Takeuchi F."/>
            <person name="Kuroda M."/>
            <person name="Yuzawa H."/>
            <person name="Aoki K."/>
            <person name="Oguchi A."/>
            <person name="Nagai Y."/>
            <person name="Iwama N."/>
            <person name="Asano K."/>
            <person name="Naimi T."/>
            <person name="Kuroda H."/>
            <person name="Cui L."/>
            <person name="Yamamoto K."/>
            <person name="Hiramatsu K."/>
        </authorList>
    </citation>
    <scope>NUCLEOTIDE SEQUENCE [LARGE SCALE GENOMIC DNA]</scope>
    <source>
        <strain>MW2</strain>
    </source>
</reference>
<name>SUCD_STAAW</name>
<gene>
    <name evidence="1" type="primary">sucD</name>
    <name type="ordered locus">MW1129</name>
</gene>
<protein>
    <recommendedName>
        <fullName evidence="1">Succinate--CoA ligase [ADP-forming] subunit alpha</fullName>
        <ecNumber evidence="1">6.2.1.5</ecNumber>
    </recommendedName>
    <alternativeName>
        <fullName evidence="1">Succinyl-CoA synthetase subunit alpha</fullName>
        <shortName evidence="1">SCS-alpha</shortName>
    </alternativeName>
</protein>
<accession>Q8NX01</accession>
<proteinExistence type="inferred from homology"/>
<evidence type="ECO:0000255" key="1">
    <source>
        <dbReference type="HAMAP-Rule" id="MF_01988"/>
    </source>
</evidence>
<keyword id="KW-0436">Ligase</keyword>
<keyword id="KW-0547">Nucleotide-binding</keyword>
<keyword id="KW-0816">Tricarboxylic acid cycle</keyword>
<feature type="chain" id="PRO_0000102804" description="Succinate--CoA ligase [ADP-forming] subunit alpha">
    <location>
        <begin position="1"/>
        <end position="302"/>
    </location>
</feature>
<feature type="active site" description="Tele-phosphohistidine intermediate" evidence="1">
    <location>
        <position position="247"/>
    </location>
</feature>
<feature type="binding site" evidence="1">
    <location>
        <begin position="17"/>
        <end position="20"/>
    </location>
    <ligand>
        <name>CoA</name>
        <dbReference type="ChEBI" id="CHEBI:57287"/>
    </ligand>
</feature>
<feature type="binding site" evidence="1">
    <location>
        <position position="43"/>
    </location>
    <ligand>
        <name>CoA</name>
        <dbReference type="ChEBI" id="CHEBI:57287"/>
    </ligand>
</feature>
<feature type="binding site" evidence="1">
    <location>
        <begin position="96"/>
        <end position="98"/>
    </location>
    <ligand>
        <name>CoA</name>
        <dbReference type="ChEBI" id="CHEBI:57287"/>
    </ligand>
</feature>
<feature type="binding site" evidence="1">
    <location>
        <position position="159"/>
    </location>
    <ligand>
        <name>substrate</name>
        <note>ligand shared with subunit beta</note>
    </ligand>
</feature>
<dbReference type="EC" id="6.2.1.5" evidence="1"/>
<dbReference type="EMBL" id="BA000033">
    <property type="protein sequence ID" value="BAB94994.1"/>
    <property type="molecule type" value="Genomic_DNA"/>
</dbReference>
<dbReference type="RefSeq" id="WP_000110251.1">
    <property type="nucleotide sequence ID" value="NC_003923.1"/>
</dbReference>
<dbReference type="SMR" id="Q8NX01"/>
<dbReference type="KEGG" id="sam:MW1129"/>
<dbReference type="HOGENOM" id="CLU_052104_0_0_9"/>
<dbReference type="UniPathway" id="UPA00223">
    <property type="reaction ID" value="UER00999"/>
</dbReference>
<dbReference type="GO" id="GO:0005829">
    <property type="term" value="C:cytosol"/>
    <property type="evidence" value="ECO:0007669"/>
    <property type="project" value="TreeGrafter"/>
</dbReference>
<dbReference type="GO" id="GO:0009361">
    <property type="term" value="C:succinate-CoA ligase complex (ADP-forming)"/>
    <property type="evidence" value="ECO:0007669"/>
    <property type="project" value="TreeGrafter"/>
</dbReference>
<dbReference type="GO" id="GO:0000166">
    <property type="term" value="F:nucleotide binding"/>
    <property type="evidence" value="ECO:0007669"/>
    <property type="project" value="UniProtKB-KW"/>
</dbReference>
<dbReference type="GO" id="GO:0004775">
    <property type="term" value="F:succinate-CoA ligase (ADP-forming) activity"/>
    <property type="evidence" value="ECO:0007669"/>
    <property type="project" value="UniProtKB-UniRule"/>
</dbReference>
<dbReference type="GO" id="GO:0004776">
    <property type="term" value="F:succinate-CoA ligase (GDP-forming) activity"/>
    <property type="evidence" value="ECO:0007669"/>
    <property type="project" value="RHEA"/>
</dbReference>
<dbReference type="GO" id="GO:0006099">
    <property type="term" value="P:tricarboxylic acid cycle"/>
    <property type="evidence" value="ECO:0007669"/>
    <property type="project" value="UniProtKB-UniRule"/>
</dbReference>
<dbReference type="FunFam" id="3.40.50.261:FF:000002">
    <property type="entry name" value="Succinate--CoA ligase [ADP-forming] subunit alpha"/>
    <property type="match status" value="1"/>
</dbReference>
<dbReference type="FunFam" id="3.40.50.720:FF:000002">
    <property type="entry name" value="Succinate--CoA ligase [ADP-forming] subunit alpha"/>
    <property type="match status" value="1"/>
</dbReference>
<dbReference type="Gene3D" id="3.40.50.720">
    <property type="entry name" value="NAD(P)-binding Rossmann-like Domain"/>
    <property type="match status" value="1"/>
</dbReference>
<dbReference type="Gene3D" id="3.40.50.261">
    <property type="entry name" value="Succinyl-CoA synthetase domains"/>
    <property type="match status" value="1"/>
</dbReference>
<dbReference type="HAMAP" id="MF_01988">
    <property type="entry name" value="Succ_CoA_alpha"/>
    <property type="match status" value="1"/>
</dbReference>
<dbReference type="InterPro" id="IPR017440">
    <property type="entry name" value="Cit_synth/succinyl-CoA_lig_AS"/>
</dbReference>
<dbReference type="InterPro" id="IPR033847">
    <property type="entry name" value="Citrt_syn/SCS-alpha_CS"/>
</dbReference>
<dbReference type="InterPro" id="IPR003781">
    <property type="entry name" value="CoA-bd"/>
</dbReference>
<dbReference type="InterPro" id="IPR005810">
    <property type="entry name" value="CoA_lig_alpha"/>
</dbReference>
<dbReference type="InterPro" id="IPR036291">
    <property type="entry name" value="NAD(P)-bd_dom_sf"/>
</dbReference>
<dbReference type="InterPro" id="IPR005811">
    <property type="entry name" value="SUCC_ACL_C"/>
</dbReference>
<dbReference type="InterPro" id="IPR016102">
    <property type="entry name" value="Succinyl-CoA_synth-like"/>
</dbReference>
<dbReference type="NCBIfam" id="NF004230">
    <property type="entry name" value="PRK05678.1"/>
    <property type="match status" value="1"/>
</dbReference>
<dbReference type="NCBIfam" id="TIGR01019">
    <property type="entry name" value="sucCoAalpha"/>
    <property type="match status" value="1"/>
</dbReference>
<dbReference type="PANTHER" id="PTHR11117:SF2">
    <property type="entry name" value="SUCCINATE--COA LIGASE [ADP_GDP-FORMING] SUBUNIT ALPHA, MITOCHONDRIAL"/>
    <property type="match status" value="1"/>
</dbReference>
<dbReference type="PANTHER" id="PTHR11117">
    <property type="entry name" value="SUCCINYL-COA LIGASE SUBUNIT ALPHA"/>
    <property type="match status" value="1"/>
</dbReference>
<dbReference type="Pfam" id="PF02629">
    <property type="entry name" value="CoA_binding"/>
    <property type="match status" value="1"/>
</dbReference>
<dbReference type="Pfam" id="PF00549">
    <property type="entry name" value="Ligase_CoA"/>
    <property type="match status" value="1"/>
</dbReference>
<dbReference type="PIRSF" id="PIRSF001553">
    <property type="entry name" value="SucCS_alpha"/>
    <property type="match status" value="1"/>
</dbReference>
<dbReference type="PRINTS" id="PR01798">
    <property type="entry name" value="SCOASYNTHASE"/>
</dbReference>
<dbReference type="SMART" id="SM00881">
    <property type="entry name" value="CoA_binding"/>
    <property type="match status" value="1"/>
</dbReference>
<dbReference type="SUPFAM" id="SSF51735">
    <property type="entry name" value="NAD(P)-binding Rossmann-fold domains"/>
    <property type="match status" value="1"/>
</dbReference>
<dbReference type="SUPFAM" id="SSF52210">
    <property type="entry name" value="Succinyl-CoA synthetase domains"/>
    <property type="match status" value="1"/>
</dbReference>
<dbReference type="PROSITE" id="PS01216">
    <property type="entry name" value="SUCCINYL_COA_LIG_1"/>
    <property type="match status" value="1"/>
</dbReference>
<dbReference type="PROSITE" id="PS00399">
    <property type="entry name" value="SUCCINYL_COA_LIG_2"/>
    <property type="match status" value="1"/>
</dbReference>